<dbReference type="EMBL" id="EU835853">
    <property type="protein sequence ID" value="ACH41108.1"/>
    <property type="molecule type" value="Genomic_DNA"/>
</dbReference>
<dbReference type="RefSeq" id="YP_002149771.1">
    <property type="nucleotide sequence ID" value="NC_011163.1"/>
</dbReference>
<dbReference type="SMR" id="B5LMR2"/>
<dbReference type="PaxDb" id="3827-XP_004517020.1"/>
<dbReference type="GeneID" id="6797570"/>
<dbReference type="KEGG" id="cam:6797570"/>
<dbReference type="eggNOG" id="KOG0899">
    <property type="taxonomic scope" value="Eukaryota"/>
</dbReference>
<dbReference type="OrthoDB" id="2043at2759"/>
<dbReference type="Proteomes" id="UP000087171">
    <property type="component" value="Chloroplast Pltd"/>
</dbReference>
<dbReference type="GO" id="GO:0009507">
    <property type="term" value="C:chloroplast"/>
    <property type="evidence" value="ECO:0007669"/>
    <property type="project" value="UniProtKB-SubCell"/>
</dbReference>
<dbReference type="GO" id="GO:0005763">
    <property type="term" value="C:mitochondrial small ribosomal subunit"/>
    <property type="evidence" value="ECO:0007669"/>
    <property type="project" value="TreeGrafter"/>
</dbReference>
<dbReference type="GO" id="GO:0019843">
    <property type="term" value="F:rRNA binding"/>
    <property type="evidence" value="ECO:0007669"/>
    <property type="project" value="UniProtKB-UniRule"/>
</dbReference>
<dbReference type="GO" id="GO:0003735">
    <property type="term" value="F:structural constituent of ribosome"/>
    <property type="evidence" value="ECO:0007669"/>
    <property type="project" value="InterPro"/>
</dbReference>
<dbReference type="GO" id="GO:0000028">
    <property type="term" value="P:ribosomal small subunit assembly"/>
    <property type="evidence" value="ECO:0007669"/>
    <property type="project" value="TreeGrafter"/>
</dbReference>
<dbReference type="GO" id="GO:0006412">
    <property type="term" value="P:translation"/>
    <property type="evidence" value="ECO:0007669"/>
    <property type="project" value="UniProtKB-UniRule"/>
</dbReference>
<dbReference type="FunFam" id="3.30.860.10:FF:000001">
    <property type="entry name" value="30S ribosomal protein S19"/>
    <property type="match status" value="1"/>
</dbReference>
<dbReference type="Gene3D" id="3.30.860.10">
    <property type="entry name" value="30s Ribosomal Protein S19, Chain A"/>
    <property type="match status" value="1"/>
</dbReference>
<dbReference type="HAMAP" id="MF_00531">
    <property type="entry name" value="Ribosomal_uS19"/>
    <property type="match status" value="1"/>
</dbReference>
<dbReference type="InterPro" id="IPR002222">
    <property type="entry name" value="Ribosomal_uS19"/>
</dbReference>
<dbReference type="InterPro" id="IPR005732">
    <property type="entry name" value="Ribosomal_uS19_bac-type"/>
</dbReference>
<dbReference type="InterPro" id="IPR020934">
    <property type="entry name" value="Ribosomal_uS19_CS"/>
</dbReference>
<dbReference type="InterPro" id="IPR023575">
    <property type="entry name" value="Ribosomal_uS19_SF"/>
</dbReference>
<dbReference type="NCBIfam" id="TIGR01050">
    <property type="entry name" value="rpsS_bact"/>
    <property type="match status" value="1"/>
</dbReference>
<dbReference type="PANTHER" id="PTHR11880">
    <property type="entry name" value="RIBOSOMAL PROTEIN S19P FAMILY MEMBER"/>
    <property type="match status" value="1"/>
</dbReference>
<dbReference type="PANTHER" id="PTHR11880:SF8">
    <property type="entry name" value="SMALL RIBOSOMAL SUBUNIT PROTEIN US19M"/>
    <property type="match status" value="1"/>
</dbReference>
<dbReference type="Pfam" id="PF00203">
    <property type="entry name" value="Ribosomal_S19"/>
    <property type="match status" value="1"/>
</dbReference>
<dbReference type="PIRSF" id="PIRSF002144">
    <property type="entry name" value="Ribosomal_S19"/>
    <property type="match status" value="1"/>
</dbReference>
<dbReference type="PRINTS" id="PR00975">
    <property type="entry name" value="RIBOSOMALS19"/>
</dbReference>
<dbReference type="SUPFAM" id="SSF54570">
    <property type="entry name" value="Ribosomal protein S19"/>
    <property type="match status" value="1"/>
</dbReference>
<dbReference type="PROSITE" id="PS00323">
    <property type="entry name" value="RIBOSOMAL_S19"/>
    <property type="match status" value="1"/>
</dbReference>
<proteinExistence type="inferred from homology"/>
<organism>
    <name type="scientific">Cicer arietinum</name>
    <name type="common">Chickpea</name>
    <name type="synonym">Garbanzo</name>
    <dbReference type="NCBI Taxonomy" id="3827"/>
    <lineage>
        <taxon>Eukaryota</taxon>
        <taxon>Viridiplantae</taxon>
        <taxon>Streptophyta</taxon>
        <taxon>Embryophyta</taxon>
        <taxon>Tracheophyta</taxon>
        <taxon>Spermatophyta</taxon>
        <taxon>Magnoliopsida</taxon>
        <taxon>eudicotyledons</taxon>
        <taxon>Gunneridae</taxon>
        <taxon>Pentapetalae</taxon>
        <taxon>rosids</taxon>
        <taxon>fabids</taxon>
        <taxon>Fabales</taxon>
        <taxon>Fabaceae</taxon>
        <taxon>Papilionoideae</taxon>
        <taxon>50 kb inversion clade</taxon>
        <taxon>NPAAA clade</taxon>
        <taxon>Hologalegina</taxon>
        <taxon>IRL clade</taxon>
        <taxon>Cicereae</taxon>
        <taxon>Cicer</taxon>
    </lineage>
</organism>
<accession>B5LMR2</accession>
<keyword id="KW-0150">Chloroplast</keyword>
<keyword id="KW-0934">Plastid</keyword>
<keyword id="KW-1185">Reference proteome</keyword>
<keyword id="KW-0687">Ribonucleoprotein</keyword>
<keyword id="KW-0689">Ribosomal protein</keyword>
<keyword id="KW-0694">RNA-binding</keyword>
<keyword id="KW-0699">rRNA-binding</keyword>
<reference key="1">
    <citation type="journal article" date="2008" name="Mol. Phylogenet. Evol.">
        <title>Complete plastid genome sequence of the chickpea (Cicer arietinum) and the phylogenetic distribution of rps12 and clpP intron losses among legumes (Leguminosae).</title>
        <authorList>
            <person name="Jansen R.K."/>
            <person name="Wojciechowski M.F."/>
            <person name="Sanniyasi E."/>
            <person name="Lee S.-B."/>
            <person name="Daniell H."/>
        </authorList>
    </citation>
    <scope>NUCLEOTIDE SEQUENCE [LARGE SCALE GENOMIC DNA]</scope>
</reference>
<name>RR19_CICAR</name>
<gene>
    <name evidence="1" type="primary">rps19</name>
</gene>
<sequence>MGRSLKKNPFVANHLLRKINKLNTKGEKEIIITWSRASTIIPTMIGHTIAIHNGREHLPIYITDRMVGHKLGEFSPTLTFRGYAKNDTKSRR</sequence>
<protein>
    <recommendedName>
        <fullName evidence="1">Small ribosomal subunit protein uS19c</fullName>
    </recommendedName>
    <alternativeName>
        <fullName evidence="2">30S ribosomal protein S19, chloroplastic</fullName>
    </alternativeName>
</protein>
<feature type="chain" id="PRO_0000354343" description="Small ribosomal subunit protein uS19c">
    <location>
        <begin position="1"/>
        <end position="92"/>
    </location>
</feature>
<geneLocation type="chloroplast"/>
<evidence type="ECO:0000255" key="1">
    <source>
        <dbReference type="HAMAP-Rule" id="MF_00531"/>
    </source>
</evidence>
<evidence type="ECO:0000305" key="2"/>
<comment type="function">
    <text evidence="1">Protein S19 forms a complex with S13 that binds strongly to the 16S ribosomal RNA.</text>
</comment>
<comment type="subcellular location">
    <subcellularLocation>
        <location>Plastid</location>
        <location>Chloroplast</location>
    </subcellularLocation>
</comment>
<comment type="similarity">
    <text evidence="1">Belongs to the universal ribosomal protein uS19 family.</text>
</comment>